<feature type="chain" id="PRO_0000196826" description="Uncharacterized mitochondrial protein AtMg01310">
    <location>
        <begin position="1"/>
        <end position="136"/>
    </location>
</feature>
<feature type="sequence conflict" description="In Ref. 5; BT014693." evidence="1" ref="5">
    <original>A</original>
    <variation>V</variation>
    <location>
        <position position="92"/>
    </location>
</feature>
<reference key="1">
    <citation type="journal article" date="1997" name="Nat. Genet.">
        <title>The mitochondrial genome of Arabidopsis thaliana contains 57 genes in 366,924 nucleotides.</title>
        <authorList>
            <person name="Unseld M."/>
            <person name="Marienfeld J.R."/>
            <person name="Brandt P."/>
            <person name="Brennicke A."/>
        </authorList>
    </citation>
    <scope>NUCLEOTIDE SEQUENCE [LARGE SCALE GENOMIC DNA]</scope>
    <source>
        <strain>cv. C24</strain>
    </source>
</reference>
<reference key="2">
    <citation type="journal article" date="2018" name="Plant Cell">
        <title>Correction of persistent errors in Arabidopsis reference mitochondrial genomes.</title>
        <authorList>
            <person name="Sloan D.B."/>
            <person name="Wu Z."/>
            <person name="Sharbrough J."/>
        </authorList>
    </citation>
    <scope>NUCLEOTIDE SEQUENCE [LARGE SCALE GENOMIC DNA]</scope>
    <source>
        <strain>cv. Columbia</strain>
    </source>
</reference>
<reference key="3">
    <citation type="journal article" date="1999" name="Nature">
        <title>Sequence and analysis of chromosome 2 of the plant Arabidopsis thaliana.</title>
        <authorList>
            <person name="Lin X."/>
            <person name="Kaul S."/>
            <person name="Rounsley S.D."/>
            <person name="Shea T.P."/>
            <person name="Benito M.-I."/>
            <person name="Town C.D."/>
            <person name="Fujii C.Y."/>
            <person name="Mason T.M."/>
            <person name="Bowman C.L."/>
            <person name="Barnstead M.E."/>
            <person name="Feldblyum T.V."/>
            <person name="Buell C.R."/>
            <person name="Ketchum K.A."/>
            <person name="Lee J.J."/>
            <person name="Ronning C.M."/>
            <person name="Koo H.L."/>
            <person name="Moffat K.S."/>
            <person name="Cronin L.A."/>
            <person name="Shen M."/>
            <person name="Pai G."/>
            <person name="Van Aken S."/>
            <person name="Umayam L."/>
            <person name="Tallon L.J."/>
            <person name="Gill J.E."/>
            <person name="Adams M.D."/>
            <person name="Carrera A.J."/>
            <person name="Creasy T.H."/>
            <person name="Goodman H.M."/>
            <person name="Somerville C.R."/>
            <person name="Copenhaver G.P."/>
            <person name="Preuss D."/>
            <person name="Nierman W.C."/>
            <person name="White O."/>
            <person name="Eisen J.A."/>
            <person name="Salzberg S.L."/>
            <person name="Fraser C.M."/>
            <person name="Venter J.C."/>
        </authorList>
    </citation>
    <scope>NUCLEOTIDE SEQUENCE [LARGE SCALE GENOMIC DNA] (AT2G07691)</scope>
    <source>
        <strain>cv. Columbia</strain>
    </source>
</reference>
<reference key="4">
    <citation type="journal article" date="2017" name="Plant J.">
        <title>Araport11: a complete reannotation of the Arabidopsis thaliana reference genome.</title>
        <authorList>
            <person name="Cheng C.Y."/>
            <person name="Krishnakumar V."/>
            <person name="Chan A.P."/>
            <person name="Thibaud-Nissen F."/>
            <person name="Schobel S."/>
            <person name="Town C.D."/>
        </authorList>
    </citation>
    <scope>GENOME REANNOTATION (AT2G07691)</scope>
    <source>
        <strain>cv. Columbia</strain>
    </source>
</reference>
<reference key="5">
    <citation type="submission" date="2004-05" db="EMBL/GenBank/DDBJ databases">
        <authorList>
            <consortium name="Center for eukaryotic structural genomics (CESG)"/>
        </authorList>
    </citation>
    <scope>NUCLEOTIDE SEQUENCE [LARGE SCALE MRNA] OF 2-136 (AT2G07691)</scope>
</reference>
<organism>
    <name type="scientific">Arabidopsis thaliana</name>
    <name type="common">Mouse-ear cress</name>
    <dbReference type="NCBI Taxonomy" id="3702"/>
    <lineage>
        <taxon>Eukaryota</taxon>
        <taxon>Viridiplantae</taxon>
        <taxon>Streptophyta</taxon>
        <taxon>Embryophyta</taxon>
        <taxon>Tracheophyta</taxon>
        <taxon>Spermatophyta</taxon>
        <taxon>Magnoliopsida</taxon>
        <taxon>eudicotyledons</taxon>
        <taxon>Gunneridae</taxon>
        <taxon>Pentapetalae</taxon>
        <taxon>rosids</taxon>
        <taxon>malvids</taxon>
        <taxon>Brassicales</taxon>
        <taxon>Brassicaceae</taxon>
        <taxon>Camelineae</taxon>
        <taxon>Arabidopsis</taxon>
    </lineage>
</organism>
<comment type="subcellular location">
    <subcellularLocation>
        <location evidence="1">Mitochondrion</location>
    </subcellularLocation>
</comment>
<comment type="miscellaneous">
    <text>A stretch of 270 kb of the mitochondrial genome is duplicated within the centromere of chromosome 2 resulting in the duplication of the gene. The expression of this duplicated gene (At2g07691) is demonstrated.</text>
</comment>
<comment type="sequence caution" evidence="1">
    <conflict type="erroneous termination">
        <sequence resource="EMBL" id="BT014693"/>
    </conflict>
    <text>Truncated C-terminus.</text>
</comment>
<name>M1310_ARATH</name>
<protein>
    <recommendedName>
        <fullName>Uncharacterized mitochondrial protein AtMg01310</fullName>
    </recommendedName>
    <alternativeName>
        <fullName>ORF136b</fullName>
    </alternativeName>
</protein>
<sequence length="136" mass="15974">MLKRKLKPKRLQLPPQDVVFEGEAAMNEYTFYRNWVESWLQHIRSYYLLFIDGDPSLSKFFEIEICAHSWKRSTFDQQVFKFGLLWECVDIARSRTVYWQCALGTGHIQEDKVSEATSPFTDDSCTNSCLSRMTGQ</sequence>
<gene>
    <name evidence="3" type="ordered locus">AtMg01310</name>
</gene>
<gene>
    <name evidence="2" type="ordered locus">At2g07691</name>
</gene>
<geneLocation type="mitochondrion"/>
<accession>P92562</accession>
<accession>Q1ZXV6</accession>
<accession>Q8S894</accession>
<keyword id="KW-0496">Mitochondrion</keyword>
<keyword id="KW-1185">Reference proteome</keyword>
<evidence type="ECO:0000305" key="1"/>
<evidence type="ECO:0000312" key="2">
    <source>
        <dbReference type="Araport" id="AT2G07691"/>
    </source>
</evidence>
<evidence type="ECO:0000312" key="3">
    <source>
        <dbReference type="Araport" id="ATMG01310"/>
    </source>
</evidence>
<dbReference type="EMBL" id="Y08501">
    <property type="protein sequence ID" value="CAA69815.1"/>
    <property type="molecule type" value="Genomic_DNA"/>
</dbReference>
<dbReference type="EMBL" id="BK010421">
    <property type="status" value="NOT_ANNOTATED_CDS"/>
    <property type="molecule type" value="Genomic_DNA"/>
</dbReference>
<dbReference type="EMBL" id="AC007729">
    <property type="protein sequence ID" value="AAM15494.1"/>
    <property type="molecule type" value="Genomic_DNA"/>
</dbReference>
<dbReference type="EMBL" id="CP002685">
    <property type="protein sequence ID" value="AEC06080.1"/>
    <property type="molecule type" value="Genomic_DNA"/>
</dbReference>
<dbReference type="EMBL" id="BT014693">
    <property type="status" value="NOT_ANNOTATED_CDS"/>
    <property type="molecule type" value="mRNA"/>
</dbReference>
<dbReference type="RefSeq" id="NP_085583.1">
    <property type="nucleotide sequence ID" value="NC_001284.2"/>
</dbReference>
<dbReference type="RefSeq" id="NP_178783.1">
    <property type="nucleotide sequence ID" value="NM_126742.2"/>
</dbReference>
<dbReference type="STRING" id="3702.P92562"/>
<dbReference type="PaxDb" id="3702-AT2G07691.1"/>
<dbReference type="DNASU" id="815367"/>
<dbReference type="EnsemblPlants" id="AT2G07691.1">
    <property type="protein sequence ID" value="AT2G07691.1"/>
    <property type="gene ID" value="AT2G07691"/>
</dbReference>
<dbReference type="EnsemblPlants" id="ATMG01310.1">
    <property type="protein sequence ID" value="ATMG01310.1"/>
    <property type="gene ID" value="ATMG01310"/>
</dbReference>
<dbReference type="GeneID" id="815367"/>
<dbReference type="Gramene" id="AT2G07691.1">
    <property type="protein sequence ID" value="AT2G07691.1"/>
    <property type="gene ID" value="AT2G07691"/>
</dbReference>
<dbReference type="Gramene" id="ATMG01310.1">
    <property type="protein sequence ID" value="ATMG01310.1"/>
    <property type="gene ID" value="ATMG01310"/>
</dbReference>
<dbReference type="KEGG" id="ath:AT2G07691"/>
<dbReference type="Araport" id="AT2G07691"/>
<dbReference type="Araport" id="ATMG01310"/>
<dbReference type="TAIR" id="AT2G07691"/>
<dbReference type="TAIR" id="ATMG01310">
    <property type="gene designation" value="ORF136B"/>
</dbReference>
<dbReference type="HOGENOM" id="CLU_1878251_0_0_1"/>
<dbReference type="InParanoid" id="P92562"/>
<dbReference type="OMA" id="SHLWEAS"/>
<dbReference type="PRO" id="PR:P92562"/>
<dbReference type="Proteomes" id="UP000006548">
    <property type="component" value="Chromosome 2"/>
</dbReference>
<dbReference type="Proteomes" id="UP000006548">
    <property type="component" value="Mitochondrion MT"/>
</dbReference>
<dbReference type="ExpressionAtlas" id="P92562">
    <property type="expression patterns" value="baseline"/>
</dbReference>
<dbReference type="GO" id="GO:0005739">
    <property type="term" value="C:mitochondrion"/>
    <property type="evidence" value="ECO:0007669"/>
    <property type="project" value="UniProtKB-SubCell"/>
</dbReference>
<proteinExistence type="evidence at transcript level"/>